<organism>
    <name type="scientific">Arabidopsis thaliana</name>
    <name type="common">Mouse-ear cress</name>
    <dbReference type="NCBI Taxonomy" id="3702"/>
    <lineage>
        <taxon>Eukaryota</taxon>
        <taxon>Viridiplantae</taxon>
        <taxon>Streptophyta</taxon>
        <taxon>Embryophyta</taxon>
        <taxon>Tracheophyta</taxon>
        <taxon>Spermatophyta</taxon>
        <taxon>Magnoliopsida</taxon>
        <taxon>eudicotyledons</taxon>
        <taxon>Gunneridae</taxon>
        <taxon>Pentapetalae</taxon>
        <taxon>rosids</taxon>
        <taxon>malvids</taxon>
        <taxon>Brassicales</taxon>
        <taxon>Brassicaceae</taxon>
        <taxon>Camelineae</taxon>
        <taxon>Arabidopsis</taxon>
    </lineage>
</organism>
<gene>
    <name type="primary">RPS19</name>
    <name type="ordered locus">At5g47320</name>
    <name type="ORF">MQL5.18</name>
</gene>
<reference key="1">
    <citation type="journal article" date="1995" name="Mol. Gen. Genet.">
        <title>orf250 encodes a second subunit of an ABC-type heme transporter in Oenothera mitochondria.</title>
        <authorList>
            <person name="Jekabsons W."/>
            <person name="Schuster W."/>
        </authorList>
    </citation>
    <scope>NUCLEOTIDE SEQUENCE [GENOMIC DNA]</scope>
    <source>
        <strain>cv. C24</strain>
    </source>
</reference>
<reference key="2">
    <citation type="journal article" date="1996" name="EMBO J.">
        <title>Transfer of rps19 to the nucleus involves the gain of an RNP-binding motif which may functionally replace RPS13 in Arabidopsis mitochondria.</title>
        <authorList>
            <person name="Sanchez H."/>
            <person name="Fester T."/>
            <person name="Kloska S."/>
            <person name="Schroeder W."/>
            <person name="Schuster W."/>
        </authorList>
    </citation>
    <scope>NUCLEOTIDE SEQUENCE [MRNA]</scope>
    <scope>PROTEIN SEQUENCE OF 30-38</scope>
    <source>
        <strain>cv. C24</strain>
    </source>
</reference>
<reference key="3">
    <citation type="journal article" date="2000" name="DNA Res.">
        <title>Structural analysis of Arabidopsis thaliana chromosome 5. X. Sequence features of the regions of 3,076,755 bp covered by sixty P1 and TAC clones.</title>
        <authorList>
            <person name="Sato S."/>
            <person name="Nakamura Y."/>
            <person name="Kaneko T."/>
            <person name="Katoh T."/>
            <person name="Asamizu E."/>
            <person name="Kotani H."/>
            <person name="Tabata S."/>
        </authorList>
    </citation>
    <scope>NUCLEOTIDE SEQUENCE [LARGE SCALE GENOMIC DNA]</scope>
    <source>
        <strain>cv. Columbia</strain>
    </source>
</reference>
<reference key="4">
    <citation type="journal article" date="2017" name="Plant J.">
        <title>Araport11: a complete reannotation of the Arabidopsis thaliana reference genome.</title>
        <authorList>
            <person name="Cheng C.Y."/>
            <person name="Krishnakumar V."/>
            <person name="Chan A.P."/>
            <person name="Thibaud-Nissen F."/>
            <person name="Schobel S."/>
            <person name="Town C.D."/>
        </authorList>
    </citation>
    <scope>GENOME REANNOTATION</scope>
    <source>
        <strain>cv. Columbia</strain>
    </source>
</reference>
<reference key="5">
    <citation type="journal article" date="2003" name="Science">
        <title>Empirical analysis of transcriptional activity in the Arabidopsis genome.</title>
        <authorList>
            <person name="Yamada K."/>
            <person name="Lim J."/>
            <person name="Dale J.M."/>
            <person name="Chen H."/>
            <person name="Shinn P."/>
            <person name="Palm C.J."/>
            <person name="Southwick A.M."/>
            <person name="Wu H.C."/>
            <person name="Kim C.J."/>
            <person name="Nguyen M."/>
            <person name="Pham P.K."/>
            <person name="Cheuk R.F."/>
            <person name="Karlin-Newmann G."/>
            <person name="Liu S.X."/>
            <person name="Lam B."/>
            <person name="Sakano H."/>
            <person name="Wu T."/>
            <person name="Yu G."/>
            <person name="Miranda M."/>
            <person name="Quach H.L."/>
            <person name="Tripp M."/>
            <person name="Chang C.H."/>
            <person name="Lee J.M."/>
            <person name="Toriumi M.J."/>
            <person name="Chan M.M."/>
            <person name="Tang C.C."/>
            <person name="Onodera C.S."/>
            <person name="Deng J.M."/>
            <person name="Akiyama K."/>
            <person name="Ansari Y."/>
            <person name="Arakawa T."/>
            <person name="Banh J."/>
            <person name="Banno F."/>
            <person name="Bowser L."/>
            <person name="Brooks S.Y."/>
            <person name="Carninci P."/>
            <person name="Chao Q."/>
            <person name="Choy N."/>
            <person name="Enju A."/>
            <person name="Goldsmith A.D."/>
            <person name="Gurjal M."/>
            <person name="Hansen N.F."/>
            <person name="Hayashizaki Y."/>
            <person name="Johnson-Hopson C."/>
            <person name="Hsuan V.W."/>
            <person name="Iida K."/>
            <person name="Karnes M."/>
            <person name="Khan S."/>
            <person name="Koesema E."/>
            <person name="Ishida J."/>
            <person name="Jiang P.X."/>
            <person name="Jones T."/>
            <person name="Kawai J."/>
            <person name="Kamiya A."/>
            <person name="Meyers C."/>
            <person name="Nakajima M."/>
            <person name="Narusaka M."/>
            <person name="Seki M."/>
            <person name="Sakurai T."/>
            <person name="Satou M."/>
            <person name="Tamse R."/>
            <person name="Vaysberg M."/>
            <person name="Wallender E.K."/>
            <person name="Wong C."/>
            <person name="Yamamura Y."/>
            <person name="Yuan S."/>
            <person name="Shinozaki K."/>
            <person name="Davis R.W."/>
            <person name="Theologis A."/>
            <person name="Ecker J.R."/>
        </authorList>
    </citation>
    <scope>NUCLEOTIDE SEQUENCE [LARGE SCALE MRNA]</scope>
    <source>
        <strain>cv. Columbia</strain>
    </source>
</reference>
<reference key="6">
    <citation type="journal article" date="1993" name="Plant J.">
        <title>An inventory of 1152 expressed sequence tags obtained by partial sequencing of cDNAs from Arabidopsis thaliana.</title>
        <authorList>
            <person name="Hoefte H."/>
            <person name="Desprez T."/>
            <person name="Amselem J."/>
            <person name="Chiapello H."/>
            <person name="Rouze P."/>
            <person name="Caboche M."/>
            <person name="Moisan A."/>
            <person name="Jourjon M.-F."/>
            <person name="Charpenteau J.-L."/>
            <person name="Berthomieu P."/>
            <person name="Guerrier D."/>
            <person name="Giraudat J."/>
            <person name="Quigley F."/>
            <person name="Thomas F."/>
            <person name="Yu D.-Y."/>
            <person name="Mache R."/>
            <person name="Raynal M."/>
            <person name="Cooke R."/>
            <person name="Grellet F."/>
            <person name="Delseny M."/>
            <person name="Parmentier Y."/>
            <person name="de Marcillac G."/>
            <person name="Gigot C."/>
            <person name="Fleck J."/>
            <person name="Philipps G."/>
            <person name="Axelos M."/>
            <person name="Bardet C."/>
            <person name="Tremousaygue D."/>
            <person name="Lescure B."/>
        </authorList>
    </citation>
    <scope>NUCLEOTIDE SEQUENCE [LARGE SCALE MRNA] OF 131-212</scope>
    <source>
        <strain>cv. C24</strain>
        <tissue>Flower bud</tissue>
    </source>
</reference>
<reference key="7">
    <citation type="journal article" date="2023" name="Plant Cell">
        <title>An updated nomenclature for plant ribosomal protein genes.</title>
        <authorList>
            <person name="Scarpin M.R."/>
            <person name="Busche M."/>
            <person name="Martinez R.E."/>
            <person name="Harper L.C."/>
            <person name="Reiser L."/>
            <person name="Szakonyi D."/>
            <person name="Merchante C."/>
            <person name="Lan T."/>
            <person name="Xiong W."/>
            <person name="Mo B."/>
            <person name="Tang G."/>
            <person name="Chen X."/>
            <person name="Bailey-Serres J."/>
            <person name="Browning K.S."/>
            <person name="Brunkard J.O."/>
        </authorList>
    </citation>
    <scope>NOMENCLATURE</scope>
</reference>
<name>RT19_ARATH</name>
<sequence>MAFCTKLGGHWKQGVNVPVSSMLGSLRYMSTKLYIGGLSPGTDEHSLKDAFSSFNGVTEARVMTNKVTGRSRGYGFVNFISEDSANSAISAMNGQELNGFNISVNVAKDWPSLPLSLDESIEEAEKKENKMMSRSVWKDPFVDAFLMKKKNAALNRKIWSRRSTILPEYVDSAVRIYNGKTHVRCKITEGKVGHKFGEFAFTRKVKKHAKAK</sequence>
<keyword id="KW-0002">3D-structure</keyword>
<keyword id="KW-0903">Direct protein sequencing</keyword>
<keyword id="KW-0496">Mitochondrion</keyword>
<keyword id="KW-1185">Reference proteome</keyword>
<keyword id="KW-0687">Ribonucleoprotein</keyword>
<keyword id="KW-0689">Ribosomal protein</keyword>
<keyword id="KW-0694">RNA-binding</keyword>
<keyword id="KW-0809">Transit peptide</keyword>
<feature type="transit peptide" description="Mitochondrion" evidence="1">
    <location>
        <begin position="1"/>
        <end position="29"/>
    </location>
</feature>
<feature type="chain" id="PRO_0000030631" description="Small ribosomal subunit protein uS19m">
    <location>
        <begin position="30"/>
        <end position="212"/>
    </location>
</feature>
<feature type="domain" description="RRM">
    <location>
        <begin position="31"/>
        <end position="109"/>
    </location>
</feature>
<feature type="sequence conflict" description="In Ref. 1; CAA54965 and 2; CAA54951." evidence="3" ref="1 2">
    <original>D</original>
    <variation>V</variation>
    <location>
        <position position="118"/>
    </location>
</feature>
<feature type="sequence conflict" description="In Ref. 2; AA sequence." evidence="3" ref="2">
    <original>F</original>
    <variation>L</variation>
    <location>
        <position position="196"/>
    </location>
</feature>
<feature type="sequence conflict" description="In Ref. 2; AA sequence." evidence="3" ref="2">
    <original>E</original>
    <variation>H</variation>
    <location>
        <position position="198"/>
    </location>
</feature>
<feature type="sequence conflict" description="In Ref. 2; AA sequence." evidence="3" ref="2">
    <original>A</original>
    <variation>E</variation>
    <location>
        <position position="200"/>
    </location>
</feature>
<dbReference type="EMBL" id="X78035">
    <property type="protein sequence ID" value="CAA54965.1"/>
    <property type="molecule type" value="Genomic_DNA"/>
</dbReference>
<dbReference type="EMBL" id="X77989">
    <property type="protein sequence ID" value="CAA54951.1"/>
    <property type="molecule type" value="mRNA"/>
</dbReference>
<dbReference type="EMBL" id="AB018117">
    <property type="protein sequence ID" value="BAA97166.1"/>
    <property type="status" value="ALT_SEQ"/>
    <property type="molecule type" value="Genomic_DNA"/>
</dbReference>
<dbReference type="EMBL" id="CP002688">
    <property type="protein sequence ID" value="AED95498.1"/>
    <property type="molecule type" value="Genomic_DNA"/>
</dbReference>
<dbReference type="EMBL" id="AY045963">
    <property type="protein sequence ID" value="AAK76637.1"/>
    <property type="molecule type" value="mRNA"/>
</dbReference>
<dbReference type="EMBL" id="AY091354">
    <property type="protein sequence ID" value="AAM14293.1"/>
    <property type="molecule type" value="mRNA"/>
</dbReference>
<dbReference type="EMBL" id="Z18203">
    <property type="protein sequence ID" value="CAA79136.1"/>
    <property type="molecule type" value="mRNA"/>
</dbReference>
<dbReference type="PIR" id="S71114">
    <property type="entry name" value="S71114"/>
</dbReference>
<dbReference type="RefSeq" id="NP_568681.1">
    <property type="nucleotide sequence ID" value="NM_124103.4"/>
</dbReference>
<dbReference type="PDB" id="6XYW">
    <property type="method" value="EM"/>
    <property type="resolution" value="3.86 A"/>
    <property type="chains" value="Br=1-212"/>
</dbReference>
<dbReference type="PDBsum" id="6XYW"/>
<dbReference type="EMDB" id="EMD-10654"/>
<dbReference type="SMR" id="P39697"/>
<dbReference type="FunCoup" id="P39697">
    <property type="interactions" value="1851"/>
</dbReference>
<dbReference type="IntAct" id="P39697">
    <property type="interactions" value="1"/>
</dbReference>
<dbReference type="STRING" id="3702.P39697"/>
<dbReference type="PaxDb" id="3702-AT5G47320.1"/>
<dbReference type="ProteomicsDB" id="228064"/>
<dbReference type="EnsemblPlants" id="AT5G47320.1">
    <property type="protein sequence ID" value="AT5G47320.1"/>
    <property type="gene ID" value="AT5G47320"/>
</dbReference>
<dbReference type="GeneID" id="834779"/>
<dbReference type="Gramene" id="AT5G47320.1">
    <property type="protein sequence ID" value="AT5G47320.1"/>
    <property type="gene ID" value="AT5G47320"/>
</dbReference>
<dbReference type="KEGG" id="ath:AT5G47320"/>
<dbReference type="Araport" id="AT5G47320"/>
<dbReference type="TAIR" id="AT5G47320">
    <property type="gene designation" value="RPS19"/>
</dbReference>
<dbReference type="eggNOG" id="KOG0899">
    <property type="taxonomic scope" value="Eukaryota"/>
</dbReference>
<dbReference type="HOGENOM" id="CLU_1333594_0_0_1"/>
<dbReference type="InParanoid" id="P39697"/>
<dbReference type="OMA" id="SAMNGQE"/>
<dbReference type="OrthoDB" id="2043at2759"/>
<dbReference type="PhylomeDB" id="P39697"/>
<dbReference type="PRO" id="PR:P39697"/>
<dbReference type="Proteomes" id="UP000006548">
    <property type="component" value="Chromosome 5"/>
</dbReference>
<dbReference type="ExpressionAtlas" id="P39697">
    <property type="expression patterns" value="baseline and differential"/>
</dbReference>
<dbReference type="GO" id="GO:0005763">
    <property type="term" value="C:mitochondrial small ribosomal subunit"/>
    <property type="evidence" value="ECO:0000314"/>
    <property type="project" value="TAIR"/>
</dbReference>
<dbReference type="GO" id="GO:0003729">
    <property type="term" value="F:mRNA binding"/>
    <property type="evidence" value="ECO:0000314"/>
    <property type="project" value="TAIR"/>
</dbReference>
<dbReference type="GO" id="GO:0003723">
    <property type="term" value="F:RNA binding"/>
    <property type="evidence" value="ECO:0000250"/>
    <property type="project" value="TAIR"/>
</dbReference>
<dbReference type="GO" id="GO:0003735">
    <property type="term" value="F:structural constituent of ribosome"/>
    <property type="evidence" value="ECO:0007669"/>
    <property type="project" value="InterPro"/>
</dbReference>
<dbReference type="GO" id="GO:0006412">
    <property type="term" value="P:translation"/>
    <property type="evidence" value="ECO:0000303"/>
    <property type="project" value="TAIR"/>
</dbReference>
<dbReference type="CDD" id="cd21608">
    <property type="entry name" value="RRM2_NsCP33_like"/>
    <property type="match status" value="1"/>
</dbReference>
<dbReference type="Gene3D" id="3.30.70.330">
    <property type="match status" value="1"/>
</dbReference>
<dbReference type="Gene3D" id="3.30.860.10">
    <property type="entry name" value="30s Ribosomal Protein S19, Chain A"/>
    <property type="match status" value="1"/>
</dbReference>
<dbReference type="HAMAP" id="MF_00531">
    <property type="entry name" value="Ribosomal_uS19"/>
    <property type="match status" value="1"/>
</dbReference>
<dbReference type="InterPro" id="IPR012677">
    <property type="entry name" value="Nucleotide-bd_a/b_plait_sf"/>
</dbReference>
<dbReference type="InterPro" id="IPR035979">
    <property type="entry name" value="RBD_domain_sf"/>
</dbReference>
<dbReference type="InterPro" id="IPR002222">
    <property type="entry name" value="Ribosomal_uS19"/>
</dbReference>
<dbReference type="InterPro" id="IPR005732">
    <property type="entry name" value="Ribosomal_uS19_bac-type"/>
</dbReference>
<dbReference type="InterPro" id="IPR020934">
    <property type="entry name" value="Ribosomal_uS19_CS"/>
</dbReference>
<dbReference type="InterPro" id="IPR023575">
    <property type="entry name" value="Ribosomal_uS19_SF"/>
</dbReference>
<dbReference type="InterPro" id="IPR048289">
    <property type="entry name" value="RRM2_NsCP33-like"/>
</dbReference>
<dbReference type="InterPro" id="IPR000504">
    <property type="entry name" value="RRM_dom"/>
</dbReference>
<dbReference type="NCBIfam" id="TIGR01050">
    <property type="entry name" value="rpsS_bact"/>
    <property type="match status" value="1"/>
</dbReference>
<dbReference type="PANTHER" id="PTHR11880">
    <property type="entry name" value="RIBOSOMAL PROTEIN S19P FAMILY MEMBER"/>
    <property type="match status" value="1"/>
</dbReference>
<dbReference type="PANTHER" id="PTHR11880:SF67">
    <property type="entry name" value="SMALL RIBOSOMAL SUBUNIT PROTEIN US19M"/>
    <property type="match status" value="1"/>
</dbReference>
<dbReference type="Pfam" id="PF00203">
    <property type="entry name" value="Ribosomal_S19"/>
    <property type="match status" value="1"/>
</dbReference>
<dbReference type="Pfam" id="PF00076">
    <property type="entry name" value="RRM_1"/>
    <property type="match status" value="1"/>
</dbReference>
<dbReference type="PRINTS" id="PR00975">
    <property type="entry name" value="RIBOSOMALS19"/>
</dbReference>
<dbReference type="SMART" id="SM00360">
    <property type="entry name" value="RRM"/>
    <property type="match status" value="1"/>
</dbReference>
<dbReference type="SUPFAM" id="SSF54570">
    <property type="entry name" value="Ribosomal protein S19"/>
    <property type="match status" value="1"/>
</dbReference>
<dbReference type="SUPFAM" id="SSF54928">
    <property type="entry name" value="RNA-binding domain, RBD"/>
    <property type="match status" value="1"/>
</dbReference>
<dbReference type="PROSITE" id="PS00323">
    <property type="entry name" value="RIBOSOMAL_S19"/>
    <property type="match status" value="1"/>
</dbReference>
<dbReference type="PROSITE" id="PS50102">
    <property type="entry name" value="RRM"/>
    <property type="match status" value="1"/>
</dbReference>
<protein>
    <recommendedName>
        <fullName evidence="2">Small ribosomal subunit protein uS19m</fullName>
    </recommendedName>
    <alternativeName>
        <fullName>40S ribosomal protein S19, mitochondrial</fullName>
    </alternativeName>
</protein>
<proteinExistence type="evidence at protein level"/>
<accession>P39697</accession>
<accession>Q41991</accession>
<accession>Q94AL0</accession>
<accession>Q9LVS7</accession>
<comment type="function">
    <text>The RNA-binding domain found in RPS19 may functionally replace the missing mitochondrial RPS13.</text>
</comment>
<comment type="subunit">
    <text evidence="3">Component of the mitochondrial ribosome small subunit.</text>
</comment>
<comment type="subcellular location">
    <subcellularLocation>
        <location evidence="2">Mitochondrion</location>
    </subcellularLocation>
</comment>
<comment type="similarity">
    <text evidence="3">Belongs to the universal ribosomal protein uS19 family.</text>
</comment>
<comment type="sequence caution" evidence="3">
    <conflict type="erroneous gene model prediction">
        <sequence resource="EMBL-CDS" id="BAA97166"/>
    </conflict>
</comment>
<evidence type="ECO:0000269" key="1">
    <source>
    </source>
</evidence>
<evidence type="ECO:0000303" key="2">
    <source>
    </source>
</evidence>
<evidence type="ECO:0000305" key="3"/>